<proteinExistence type="inferred from homology"/>
<name>DAPF_METTP</name>
<accession>A0B6C1</accession>
<protein>
    <recommendedName>
        <fullName evidence="1">Diaminopimelate epimerase</fullName>
        <shortName evidence="1">DAP epimerase</shortName>
        <ecNumber evidence="1">5.1.1.7</ecNumber>
    </recommendedName>
    <alternativeName>
        <fullName evidence="1">PLP-independent amino acid racemase</fullName>
    </alternativeName>
</protein>
<gene>
    <name evidence="1" type="primary">dapF</name>
    <name type="ordered locus">Mthe_0454</name>
</gene>
<reference key="1">
    <citation type="submission" date="2006-10" db="EMBL/GenBank/DDBJ databases">
        <title>Complete sequence of Methanosaeta thermophila PT.</title>
        <authorList>
            <consortium name="US DOE Joint Genome Institute"/>
            <person name="Copeland A."/>
            <person name="Lucas S."/>
            <person name="Lapidus A."/>
            <person name="Barry K."/>
            <person name="Detter J.C."/>
            <person name="Glavina del Rio T."/>
            <person name="Hammon N."/>
            <person name="Israni S."/>
            <person name="Pitluck S."/>
            <person name="Chain P."/>
            <person name="Malfatti S."/>
            <person name="Shin M."/>
            <person name="Vergez L."/>
            <person name="Schmutz J."/>
            <person name="Larimer F."/>
            <person name="Land M."/>
            <person name="Hauser L."/>
            <person name="Kyrpides N."/>
            <person name="Kim E."/>
            <person name="Smith K.S."/>
            <person name="Ingram-Smith C."/>
            <person name="Richardson P."/>
        </authorList>
    </citation>
    <scope>NUCLEOTIDE SEQUENCE [LARGE SCALE GENOMIC DNA]</scope>
    <source>
        <strain>DSM 6194 / JCM 14653 / NBRC 101360 / PT</strain>
    </source>
</reference>
<comment type="function">
    <text evidence="1">Catalyzes the stereoinversion of LL-2,6-diaminopimelate (L,L-DAP) to meso-diaminopimelate (meso-DAP), a precursor of L-lysine.</text>
</comment>
<comment type="catalytic activity">
    <reaction evidence="1">
        <text>(2S,6S)-2,6-diaminopimelate = meso-2,6-diaminopimelate</text>
        <dbReference type="Rhea" id="RHEA:15393"/>
        <dbReference type="ChEBI" id="CHEBI:57609"/>
        <dbReference type="ChEBI" id="CHEBI:57791"/>
        <dbReference type="EC" id="5.1.1.7"/>
    </reaction>
</comment>
<comment type="pathway">
    <text evidence="1">Amino-acid biosynthesis; L-lysine biosynthesis via DAP pathway; DL-2,6-diaminopimelate from LL-2,6-diaminopimelate: step 1/1.</text>
</comment>
<comment type="subunit">
    <text evidence="1">Homodimer.</text>
</comment>
<comment type="subcellular location">
    <subcellularLocation>
        <location evidence="1">Cytoplasm</location>
    </subcellularLocation>
</comment>
<comment type="similarity">
    <text evidence="1">Belongs to the diaminopimelate epimerase family.</text>
</comment>
<dbReference type="EC" id="5.1.1.7" evidence="1"/>
<dbReference type="EMBL" id="CP000477">
    <property type="protein sequence ID" value="ABK14245.1"/>
    <property type="molecule type" value="Genomic_DNA"/>
</dbReference>
<dbReference type="RefSeq" id="WP_011695643.1">
    <property type="nucleotide sequence ID" value="NC_008553.1"/>
</dbReference>
<dbReference type="SMR" id="A0B6C1"/>
<dbReference type="STRING" id="349307.Mthe_0454"/>
<dbReference type="GeneID" id="4462611"/>
<dbReference type="KEGG" id="mtp:Mthe_0454"/>
<dbReference type="HOGENOM" id="CLU_053306_3_0_2"/>
<dbReference type="OrthoDB" id="358699at2157"/>
<dbReference type="UniPathway" id="UPA00034">
    <property type="reaction ID" value="UER00025"/>
</dbReference>
<dbReference type="Proteomes" id="UP000000674">
    <property type="component" value="Chromosome"/>
</dbReference>
<dbReference type="GO" id="GO:0005829">
    <property type="term" value="C:cytosol"/>
    <property type="evidence" value="ECO:0007669"/>
    <property type="project" value="TreeGrafter"/>
</dbReference>
<dbReference type="GO" id="GO:0008837">
    <property type="term" value="F:diaminopimelate epimerase activity"/>
    <property type="evidence" value="ECO:0007669"/>
    <property type="project" value="UniProtKB-UniRule"/>
</dbReference>
<dbReference type="GO" id="GO:0009089">
    <property type="term" value="P:lysine biosynthetic process via diaminopimelate"/>
    <property type="evidence" value="ECO:0007669"/>
    <property type="project" value="UniProtKB-UniRule"/>
</dbReference>
<dbReference type="Gene3D" id="3.10.310.10">
    <property type="entry name" value="Diaminopimelate Epimerase, Chain A, domain 1"/>
    <property type="match status" value="2"/>
</dbReference>
<dbReference type="HAMAP" id="MF_00197">
    <property type="entry name" value="DAP_epimerase"/>
    <property type="match status" value="1"/>
</dbReference>
<dbReference type="InterPro" id="IPR001653">
    <property type="entry name" value="DAP_epimerase_DapF"/>
</dbReference>
<dbReference type="NCBIfam" id="TIGR00652">
    <property type="entry name" value="DapF"/>
    <property type="match status" value="1"/>
</dbReference>
<dbReference type="PANTHER" id="PTHR31689:SF0">
    <property type="entry name" value="DIAMINOPIMELATE EPIMERASE"/>
    <property type="match status" value="1"/>
</dbReference>
<dbReference type="PANTHER" id="PTHR31689">
    <property type="entry name" value="DIAMINOPIMELATE EPIMERASE, CHLOROPLASTIC"/>
    <property type="match status" value="1"/>
</dbReference>
<dbReference type="Pfam" id="PF01678">
    <property type="entry name" value="DAP_epimerase"/>
    <property type="match status" value="2"/>
</dbReference>
<dbReference type="SUPFAM" id="SSF54506">
    <property type="entry name" value="Diaminopimelate epimerase-like"/>
    <property type="match status" value="2"/>
</dbReference>
<sequence length="279" mass="30386">MNQLEFVKLHGNGNDFILIDELNGERIPEDEKSEASRILCHRNFGIGGDGVLFLVPSERADIGMRLFQPDGSEAEMCGNGIRCLAKHAWESGYVGERFSVETLAGVIPIQVRRDRKGFWARVEMGIPRFERSEIPADGEGTFLKVPLHGFEVSAVNTGVPHAVIFVENLDIPVEQIAPKIRHSSCFPEGANVNFVRLGNHLEVRTFERGVEAETLSCGTGSVAAAAVARRLGLVGETVEVMTKGGPLRISFAGEKAFMEGPAVTVCRGVVSDEILQTLQ</sequence>
<evidence type="ECO:0000255" key="1">
    <source>
        <dbReference type="HAMAP-Rule" id="MF_00197"/>
    </source>
</evidence>
<organism>
    <name type="scientific">Methanothrix thermoacetophila (strain DSM 6194 / JCM 14653 / NBRC 101360 / PT)</name>
    <name type="common">Methanosaeta thermophila</name>
    <dbReference type="NCBI Taxonomy" id="349307"/>
    <lineage>
        <taxon>Archaea</taxon>
        <taxon>Methanobacteriati</taxon>
        <taxon>Methanobacteriota</taxon>
        <taxon>Stenosarchaea group</taxon>
        <taxon>Methanomicrobia</taxon>
        <taxon>Methanotrichales</taxon>
        <taxon>Methanotrichaceae</taxon>
        <taxon>Methanothrix</taxon>
    </lineage>
</organism>
<keyword id="KW-0028">Amino-acid biosynthesis</keyword>
<keyword id="KW-0963">Cytoplasm</keyword>
<keyword id="KW-0413">Isomerase</keyword>
<keyword id="KW-0457">Lysine biosynthesis</keyword>
<keyword id="KW-1185">Reference proteome</keyword>
<feature type="chain" id="PRO_1000011905" description="Diaminopimelate epimerase">
    <location>
        <begin position="1"/>
        <end position="279"/>
    </location>
</feature>
<feature type="active site" description="Proton donor" evidence="1">
    <location>
        <position position="77"/>
    </location>
</feature>
<feature type="active site" description="Proton acceptor" evidence="1">
    <location>
        <position position="217"/>
    </location>
</feature>
<feature type="binding site" evidence="1">
    <location>
        <position position="14"/>
    </location>
    <ligand>
        <name>substrate</name>
    </ligand>
</feature>
<feature type="binding site" evidence="1">
    <location>
        <position position="68"/>
    </location>
    <ligand>
        <name>substrate</name>
    </ligand>
</feature>
<feature type="binding site" evidence="1">
    <location>
        <begin position="78"/>
        <end position="79"/>
    </location>
    <ligand>
        <name>substrate</name>
    </ligand>
</feature>
<feature type="binding site" evidence="1">
    <location>
        <position position="191"/>
    </location>
    <ligand>
        <name>substrate</name>
    </ligand>
</feature>
<feature type="binding site" evidence="1">
    <location>
        <begin position="207"/>
        <end position="208"/>
    </location>
    <ligand>
        <name>substrate</name>
    </ligand>
</feature>
<feature type="binding site" evidence="1">
    <location>
        <begin position="218"/>
        <end position="219"/>
    </location>
    <ligand>
        <name>substrate</name>
    </ligand>
</feature>
<feature type="site" description="Could be important to modulate the pK values of the two catalytic cysteine residues" evidence="1">
    <location>
        <position position="161"/>
    </location>
</feature>
<feature type="site" description="Could be important to modulate the pK values of the two catalytic cysteine residues" evidence="1">
    <location>
        <position position="207"/>
    </location>
</feature>